<comment type="function">
    <text evidence="1">Accessory subunit of the mitochondrial membrane respiratory chain NADH dehydrogenase (Complex I), that is believed not to be involved in catalysis. Complex I functions in the transfer of electrons from NADH to the respiratory chain. The immediate electron acceptor for the enzyme is believed to be ubiquinone.</text>
</comment>
<comment type="subunit">
    <text evidence="1">Complex I is composed of 45 different subunits.</text>
</comment>
<comment type="subcellular location">
    <subcellularLocation>
        <location evidence="1">Mitochondrion inner membrane</location>
        <topology evidence="1">Single-pass membrane protein</topology>
        <orientation evidence="1">Matrix side</orientation>
    </subcellularLocation>
</comment>
<comment type="PTM">
    <text evidence="1">Methylation at His residues by METTL9 enhances complex I-mediated mitochondrial respiration.</text>
</comment>
<comment type="similarity">
    <text evidence="5">Belongs to the complex I NDUFB3 subunit family.</text>
</comment>
<sequence length="98" mass="11402">MAHEHGHEHGHHKMELPDYRQWKIEGTPLETIQKKLAAKGLRDPWGRNEAWRYMGGFAKSVSFSDVFFKGFKWGFAAFVVAVGAEYYLESLNKDKKHH</sequence>
<gene>
    <name type="primary">NDUFB3</name>
</gene>
<protein>
    <recommendedName>
        <fullName>NADH dehydrogenase [ubiquinone] 1 beta subcomplex subunit 3</fullName>
    </recommendedName>
    <alternativeName>
        <fullName>Complex I-B12</fullName>
        <shortName>CI-B12</shortName>
    </alternativeName>
    <alternativeName>
        <fullName>NADH-ubiquinone oxidoreductase B12 subunit</fullName>
    </alternativeName>
</protein>
<proteinExistence type="inferred from homology"/>
<accession>Q0MQD1</accession>
<name>NDUB3_GORGO</name>
<evidence type="ECO:0000250" key="1">
    <source>
        <dbReference type="UniProtKB" id="O43676"/>
    </source>
</evidence>
<evidence type="ECO:0000250" key="2">
    <source>
        <dbReference type="UniProtKB" id="Q02365"/>
    </source>
</evidence>
<evidence type="ECO:0000250" key="3">
    <source>
        <dbReference type="UniProtKB" id="Q9CQZ6"/>
    </source>
</evidence>
<evidence type="ECO:0000255" key="4"/>
<evidence type="ECO:0000305" key="5"/>
<reference key="1">
    <citation type="journal article" date="2006" name="Gene">
        <title>Adaptive selection of mitochondrial complex I subunits during primate radiation.</title>
        <authorList>
            <person name="Mishmar D."/>
            <person name="Ruiz-Pesini E."/>
            <person name="Mondragon-Palomino M."/>
            <person name="Procaccio V."/>
            <person name="Gaut B."/>
            <person name="Wallace D.C."/>
        </authorList>
    </citation>
    <scope>NUCLEOTIDE SEQUENCE [MRNA]</scope>
</reference>
<keyword id="KW-0007">Acetylation</keyword>
<keyword id="KW-0249">Electron transport</keyword>
<keyword id="KW-0472">Membrane</keyword>
<keyword id="KW-0488">Methylation</keyword>
<keyword id="KW-0496">Mitochondrion</keyword>
<keyword id="KW-0999">Mitochondrion inner membrane</keyword>
<keyword id="KW-1185">Reference proteome</keyword>
<keyword id="KW-0679">Respiratory chain</keyword>
<keyword id="KW-0812">Transmembrane</keyword>
<keyword id="KW-1133">Transmembrane helix</keyword>
<keyword id="KW-0813">Transport</keyword>
<organism>
    <name type="scientific">Gorilla gorilla gorilla</name>
    <name type="common">Western lowland gorilla</name>
    <dbReference type="NCBI Taxonomy" id="9595"/>
    <lineage>
        <taxon>Eukaryota</taxon>
        <taxon>Metazoa</taxon>
        <taxon>Chordata</taxon>
        <taxon>Craniata</taxon>
        <taxon>Vertebrata</taxon>
        <taxon>Euteleostomi</taxon>
        <taxon>Mammalia</taxon>
        <taxon>Eutheria</taxon>
        <taxon>Euarchontoglires</taxon>
        <taxon>Primates</taxon>
        <taxon>Haplorrhini</taxon>
        <taxon>Catarrhini</taxon>
        <taxon>Hominidae</taxon>
        <taxon>Gorilla</taxon>
    </lineage>
</organism>
<feature type="initiator methionine" description="Removed" evidence="2">
    <location>
        <position position="1"/>
    </location>
</feature>
<feature type="chain" id="PRO_0000251828" description="NADH dehydrogenase [ubiquinone] 1 beta subcomplex subunit 3">
    <location>
        <begin position="2"/>
        <end position="98"/>
    </location>
</feature>
<feature type="transmembrane region" description="Helical" evidence="4">
    <location>
        <begin position="66"/>
        <end position="88"/>
    </location>
</feature>
<feature type="modified residue" description="N-acetylalanine" evidence="2">
    <location>
        <position position="2"/>
    </location>
</feature>
<feature type="modified residue" description="Pros-methylhistidine" evidence="1">
    <location>
        <position position="5"/>
    </location>
</feature>
<feature type="modified residue" description="Pros-methylhistidine" evidence="1">
    <location>
        <position position="7"/>
    </location>
</feature>
<feature type="modified residue" description="Pros-methylhistidine" evidence="1">
    <location>
        <position position="9"/>
    </location>
</feature>
<feature type="modified residue" description="N6-acetyllysine; alternate" evidence="3">
    <location>
        <position position="23"/>
    </location>
</feature>
<feature type="modified residue" description="N6-succinyllysine; alternate" evidence="3">
    <location>
        <position position="23"/>
    </location>
</feature>
<feature type="modified residue" description="N6-acetyllysine; alternate" evidence="3">
    <location>
        <position position="34"/>
    </location>
</feature>
<feature type="modified residue" description="N6-succinyllysine; alternate" evidence="3">
    <location>
        <position position="34"/>
    </location>
</feature>
<dbReference type="EMBL" id="DQ885703">
    <property type="protein sequence ID" value="ABH12212.1"/>
    <property type="molecule type" value="mRNA"/>
</dbReference>
<dbReference type="RefSeq" id="NP_001266646.1">
    <property type="nucleotide sequence ID" value="NM_001279717.1"/>
</dbReference>
<dbReference type="RefSeq" id="XP_018877155.1">
    <property type="nucleotide sequence ID" value="XM_019021610.3"/>
</dbReference>
<dbReference type="RefSeq" id="XP_018877156.1">
    <property type="nucleotide sequence ID" value="XM_019021611.1"/>
</dbReference>
<dbReference type="RefSeq" id="XP_055234983.1">
    <property type="nucleotide sequence ID" value="XM_055379008.2"/>
</dbReference>
<dbReference type="RefSeq" id="XP_055234984.1">
    <property type="nucleotide sequence ID" value="XM_055379009.2"/>
</dbReference>
<dbReference type="SMR" id="Q0MQD1"/>
<dbReference type="FunCoup" id="Q0MQD1">
    <property type="interactions" value="553"/>
</dbReference>
<dbReference type="STRING" id="9593.ENSGGOP00000017605"/>
<dbReference type="Ensembl" id="ENSGGOT00000025368.2">
    <property type="protein sequence ID" value="ENSGGOP00000017605.1"/>
    <property type="gene ID" value="ENSGGOG00000023537.2"/>
</dbReference>
<dbReference type="GeneID" id="101132493"/>
<dbReference type="KEGG" id="ggo:101132493"/>
<dbReference type="CTD" id="4709"/>
<dbReference type="eggNOG" id="KOG4631">
    <property type="taxonomic scope" value="Eukaryota"/>
</dbReference>
<dbReference type="GeneTree" id="ENSGT00390000010316"/>
<dbReference type="HOGENOM" id="CLU_160226_1_0_1"/>
<dbReference type="InParanoid" id="Q0MQD1"/>
<dbReference type="OMA" id="EAWRYEP"/>
<dbReference type="OrthoDB" id="15751at9604"/>
<dbReference type="Proteomes" id="UP000001519">
    <property type="component" value="Chromosome 2B"/>
</dbReference>
<dbReference type="Bgee" id="ENSGGOG00000023537">
    <property type="expression patterns" value="Expressed in heart and 6 other cell types or tissues"/>
</dbReference>
<dbReference type="GO" id="GO:0005743">
    <property type="term" value="C:mitochondrial inner membrane"/>
    <property type="evidence" value="ECO:0007669"/>
    <property type="project" value="UniProtKB-SubCell"/>
</dbReference>
<dbReference type="GO" id="GO:0045271">
    <property type="term" value="C:respiratory chain complex I"/>
    <property type="evidence" value="ECO:0000250"/>
    <property type="project" value="UniProtKB"/>
</dbReference>
<dbReference type="GO" id="GO:0022900">
    <property type="term" value="P:electron transport chain"/>
    <property type="evidence" value="ECO:0007669"/>
    <property type="project" value="InterPro"/>
</dbReference>
<dbReference type="GO" id="GO:0032981">
    <property type="term" value="P:mitochondrial respiratory chain complex I assembly"/>
    <property type="evidence" value="ECO:0000318"/>
    <property type="project" value="GO_Central"/>
</dbReference>
<dbReference type="InterPro" id="IPR012576">
    <property type="entry name" value="NDUFB3"/>
</dbReference>
<dbReference type="PANTHER" id="PTHR15082:SF2">
    <property type="entry name" value="NADH DEHYDROGENASE [UBIQUINONE] 1 BETA SUBCOMPLEX SUBUNIT 3"/>
    <property type="match status" value="1"/>
</dbReference>
<dbReference type="PANTHER" id="PTHR15082">
    <property type="entry name" value="NADH-UBIQUINONE OXIDOREDUCTASE B12 SUBUNIT"/>
    <property type="match status" value="1"/>
</dbReference>
<dbReference type="Pfam" id="PF08122">
    <property type="entry name" value="NDUF_B12"/>
    <property type="match status" value="1"/>
</dbReference>